<keyword id="KW-0315">Glutamine amidotransferase</keyword>
<keyword id="KW-0378">Hydrolase</keyword>
<keyword id="KW-0456">Lyase</keyword>
<keyword id="KW-0663">Pyridoxal phosphate</keyword>
<keyword id="KW-1185">Reference proteome</keyword>
<reference key="1">
    <citation type="journal article" date="2002" name="Proc. Natl. Acad. Sci. U.S.A.">
        <title>The complete genome of hyperthermophile Methanopyrus kandleri AV19 and monophyly of archaeal methanogens.</title>
        <authorList>
            <person name="Slesarev A.I."/>
            <person name="Mezhevaya K.V."/>
            <person name="Makarova K.S."/>
            <person name="Polushin N.N."/>
            <person name="Shcherbinina O.V."/>
            <person name="Shakhova V.V."/>
            <person name="Belova G.I."/>
            <person name="Aravind L."/>
            <person name="Natale D.A."/>
            <person name="Rogozin I.B."/>
            <person name="Tatusov R.L."/>
            <person name="Wolf Y.I."/>
            <person name="Stetter K.O."/>
            <person name="Malykh A.G."/>
            <person name="Koonin E.V."/>
            <person name="Kozyavkin S.A."/>
        </authorList>
    </citation>
    <scope>NUCLEOTIDE SEQUENCE [LARGE SCALE GENOMIC DNA]</scope>
    <source>
        <strain>AV19 / DSM 6324 / JCM 9639 / NBRC 100938</strain>
    </source>
</reference>
<comment type="function">
    <text evidence="1">Catalyzes the hydrolysis of glutamine to glutamate and ammonia as part of the biosynthesis of pyridoxal 5'-phosphate. The resulting ammonia molecule is channeled to the active site of PdxS.</text>
</comment>
<comment type="catalytic activity">
    <reaction evidence="1">
        <text>aldehydo-D-ribose 5-phosphate + D-glyceraldehyde 3-phosphate + L-glutamine = pyridoxal 5'-phosphate + L-glutamate + phosphate + 3 H2O + H(+)</text>
        <dbReference type="Rhea" id="RHEA:31507"/>
        <dbReference type="ChEBI" id="CHEBI:15377"/>
        <dbReference type="ChEBI" id="CHEBI:15378"/>
        <dbReference type="ChEBI" id="CHEBI:29985"/>
        <dbReference type="ChEBI" id="CHEBI:43474"/>
        <dbReference type="ChEBI" id="CHEBI:58273"/>
        <dbReference type="ChEBI" id="CHEBI:58359"/>
        <dbReference type="ChEBI" id="CHEBI:59776"/>
        <dbReference type="ChEBI" id="CHEBI:597326"/>
        <dbReference type="EC" id="4.3.3.6"/>
    </reaction>
</comment>
<comment type="catalytic activity">
    <reaction evidence="1">
        <text>L-glutamine + H2O = L-glutamate + NH4(+)</text>
        <dbReference type="Rhea" id="RHEA:15889"/>
        <dbReference type="ChEBI" id="CHEBI:15377"/>
        <dbReference type="ChEBI" id="CHEBI:28938"/>
        <dbReference type="ChEBI" id="CHEBI:29985"/>
        <dbReference type="ChEBI" id="CHEBI:58359"/>
        <dbReference type="EC" id="3.5.1.2"/>
    </reaction>
</comment>
<comment type="pathway">
    <text evidence="1">Cofactor biosynthesis; pyridoxal 5'-phosphate biosynthesis.</text>
</comment>
<comment type="subunit">
    <text evidence="1">In the presence of PdxS, forms a dodecamer of heterodimers. Only shows activity in the heterodimer.</text>
</comment>
<comment type="similarity">
    <text evidence="1">Belongs to the glutaminase PdxT/SNO family.</text>
</comment>
<accession>Q8TWH2</accession>
<name>PDXT_METKA</name>
<dbReference type="EC" id="4.3.3.6" evidence="1"/>
<dbReference type="EC" id="3.5.1.2" evidence="1"/>
<dbReference type="EMBL" id="AE009439">
    <property type="protein sequence ID" value="AAM02275.1"/>
    <property type="molecule type" value="Genomic_DNA"/>
</dbReference>
<dbReference type="RefSeq" id="WP_011019430.1">
    <property type="nucleotide sequence ID" value="NC_003551.1"/>
</dbReference>
<dbReference type="SMR" id="Q8TWH2"/>
<dbReference type="FunCoup" id="Q8TWH2">
    <property type="interactions" value="117"/>
</dbReference>
<dbReference type="STRING" id="190192.MK1062"/>
<dbReference type="PaxDb" id="190192-MK1062"/>
<dbReference type="EnsemblBacteria" id="AAM02275">
    <property type="protein sequence ID" value="AAM02275"/>
    <property type="gene ID" value="MK1062"/>
</dbReference>
<dbReference type="GeneID" id="1477163"/>
<dbReference type="KEGG" id="mka:MK1062"/>
<dbReference type="PATRIC" id="fig|190192.8.peg.1116"/>
<dbReference type="HOGENOM" id="CLU_069674_2_0_2"/>
<dbReference type="InParanoid" id="Q8TWH2"/>
<dbReference type="OrthoDB" id="26717at2157"/>
<dbReference type="UniPathway" id="UPA00245"/>
<dbReference type="Proteomes" id="UP000001826">
    <property type="component" value="Chromosome"/>
</dbReference>
<dbReference type="GO" id="GO:0005829">
    <property type="term" value="C:cytosol"/>
    <property type="evidence" value="ECO:0007669"/>
    <property type="project" value="TreeGrafter"/>
</dbReference>
<dbReference type="GO" id="GO:1903600">
    <property type="term" value="C:glutaminase complex"/>
    <property type="evidence" value="ECO:0007669"/>
    <property type="project" value="TreeGrafter"/>
</dbReference>
<dbReference type="GO" id="GO:0004359">
    <property type="term" value="F:glutaminase activity"/>
    <property type="evidence" value="ECO:0007669"/>
    <property type="project" value="UniProtKB-UniRule"/>
</dbReference>
<dbReference type="GO" id="GO:0036381">
    <property type="term" value="F:pyridoxal 5'-phosphate synthase (glutamine hydrolysing) activity"/>
    <property type="evidence" value="ECO:0007669"/>
    <property type="project" value="UniProtKB-UniRule"/>
</dbReference>
<dbReference type="GO" id="GO:0006543">
    <property type="term" value="P:glutamine catabolic process"/>
    <property type="evidence" value="ECO:0007669"/>
    <property type="project" value="UniProtKB-UniRule"/>
</dbReference>
<dbReference type="GO" id="GO:0042823">
    <property type="term" value="P:pyridoxal phosphate biosynthetic process"/>
    <property type="evidence" value="ECO:0007669"/>
    <property type="project" value="UniProtKB-UniRule"/>
</dbReference>
<dbReference type="GO" id="GO:0008614">
    <property type="term" value="P:pyridoxine metabolic process"/>
    <property type="evidence" value="ECO:0007669"/>
    <property type="project" value="TreeGrafter"/>
</dbReference>
<dbReference type="CDD" id="cd01749">
    <property type="entry name" value="GATase1_PB"/>
    <property type="match status" value="1"/>
</dbReference>
<dbReference type="FunFam" id="3.40.50.880:FF:000041">
    <property type="entry name" value="Glutamine amidotransferase subunit pdxT, putative"/>
    <property type="match status" value="1"/>
</dbReference>
<dbReference type="Gene3D" id="3.40.50.880">
    <property type="match status" value="1"/>
</dbReference>
<dbReference type="HAMAP" id="MF_01615">
    <property type="entry name" value="PdxT"/>
    <property type="match status" value="1"/>
</dbReference>
<dbReference type="InterPro" id="IPR029062">
    <property type="entry name" value="Class_I_gatase-like"/>
</dbReference>
<dbReference type="InterPro" id="IPR002161">
    <property type="entry name" value="PdxT/SNO"/>
</dbReference>
<dbReference type="InterPro" id="IPR021196">
    <property type="entry name" value="PdxT/SNO_CS"/>
</dbReference>
<dbReference type="NCBIfam" id="TIGR03800">
    <property type="entry name" value="PLP_synth_Pdx2"/>
    <property type="match status" value="1"/>
</dbReference>
<dbReference type="PANTHER" id="PTHR31559">
    <property type="entry name" value="PYRIDOXAL 5'-PHOSPHATE SYNTHASE SUBUNIT SNO"/>
    <property type="match status" value="1"/>
</dbReference>
<dbReference type="PANTHER" id="PTHR31559:SF0">
    <property type="entry name" value="PYRIDOXAL 5'-PHOSPHATE SYNTHASE SUBUNIT SNO1-RELATED"/>
    <property type="match status" value="1"/>
</dbReference>
<dbReference type="Pfam" id="PF01174">
    <property type="entry name" value="SNO"/>
    <property type="match status" value="1"/>
</dbReference>
<dbReference type="PIRSF" id="PIRSF005639">
    <property type="entry name" value="Glut_amidoT_SNO"/>
    <property type="match status" value="1"/>
</dbReference>
<dbReference type="SMART" id="SM01211">
    <property type="entry name" value="GATase_5"/>
    <property type="match status" value="1"/>
</dbReference>
<dbReference type="SUPFAM" id="SSF52317">
    <property type="entry name" value="Class I glutamine amidotransferase-like"/>
    <property type="match status" value="1"/>
</dbReference>
<dbReference type="PROSITE" id="PS01236">
    <property type="entry name" value="PDXT_SNO_1"/>
    <property type="match status" value="1"/>
</dbReference>
<dbReference type="PROSITE" id="PS51130">
    <property type="entry name" value="PDXT_SNO_2"/>
    <property type="match status" value="1"/>
</dbReference>
<evidence type="ECO:0000255" key="1">
    <source>
        <dbReference type="HAMAP-Rule" id="MF_01615"/>
    </source>
</evidence>
<protein>
    <recommendedName>
        <fullName evidence="1">Pyridoxal 5'-phosphate synthase subunit PdxT</fullName>
        <ecNumber evidence="1">4.3.3.6</ecNumber>
    </recommendedName>
    <alternativeName>
        <fullName evidence="1">Pdx2</fullName>
    </alternativeName>
    <alternativeName>
        <fullName evidence="1">Pyridoxal 5'-phosphate synthase glutaminase subunit</fullName>
        <ecNumber evidence="1">3.5.1.2</ecNumber>
    </alternativeName>
</protein>
<feature type="chain" id="PRO_0000135681" description="Pyridoxal 5'-phosphate synthase subunit PdxT">
    <location>
        <begin position="1"/>
        <end position="202"/>
    </location>
</feature>
<feature type="active site" description="Nucleophile" evidence="1">
    <location>
        <position position="84"/>
    </location>
</feature>
<feature type="active site" description="Charge relay system" evidence="1">
    <location>
        <position position="185"/>
    </location>
</feature>
<feature type="active site" description="Charge relay system" evidence="1">
    <location>
        <position position="187"/>
    </location>
</feature>
<feature type="binding site" evidence="1">
    <location>
        <begin position="52"/>
        <end position="54"/>
    </location>
    <ligand>
        <name>L-glutamine</name>
        <dbReference type="ChEBI" id="CHEBI:58359"/>
    </ligand>
</feature>
<feature type="binding site" evidence="1">
    <location>
        <position position="120"/>
    </location>
    <ligand>
        <name>L-glutamine</name>
        <dbReference type="ChEBI" id="CHEBI:58359"/>
    </ligand>
</feature>
<feature type="binding site" evidence="1">
    <location>
        <begin position="148"/>
        <end position="149"/>
    </location>
    <ligand>
        <name>L-glutamine</name>
        <dbReference type="ChEBI" id="CHEBI:58359"/>
    </ligand>
</feature>
<proteinExistence type="inferred from homology"/>
<organism>
    <name type="scientific">Methanopyrus kandleri (strain AV19 / DSM 6324 / JCM 9639 / NBRC 100938)</name>
    <dbReference type="NCBI Taxonomy" id="190192"/>
    <lineage>
        <taxon>Archaea</taxon>
        <taxon>Methanobacteriati</taxon>
        <taxon>Methanobacteriota</taxon>
        <taxon>Methanomada group</taxon>
        <taxon>Methanopyri</taxon>
        <taxon>Methanopyrales</taxon>
        <taxon>Methanopyraceae</taxon>
        <taxon>Methanopyrus</taxon>
    </lineage>
</organism>
<sequence length="202" mass="22377">MKVAVVAVQGAVEEHESILEAAGERIGEDVEVVWARYPEDLEDVDAVVIPGGESTTIGRLMERHDLVKPLLELAESDTPILGTCAGMVILAREVVPQAHPGTEVEIEQPLLGLMDVRVVRNAFGRQRESFEVDIEIEGLEDRFRAVFIRAPAVDEVLSDDVKVLAEYGDYIVAVEQDHLLATAFHPELTDDPRLHAYFLEKV</sequence>
<gene>
    <name evidence="1" type="primary">pdxT</name>
    <name type="ordered locus">MK1062</name>
</gene>